<sequence length="341" mass="36549">MKITYKSAGVDVDEGQRAVQLMKNHVKSTFNSNVLADIGGFGGLFSLNIKDYKEPVLVAGTDGVGTKLKIAFMMDKHDTIGQDCVAMCVNDILCQGGKPLFFLDYVATGKLVGEKIAQIVGGIAEGCRKAGSALIGGETAEMPGLYAENEYDLAGFAVGIVDREQIITGANIKAGDIILGLPSNGIHSNGYSLVRKLFFEVLDMKITDYVEEFGTTLGEELLKPTKIYVKEILSLIEAIPVKGISHITGGGFFENIPRILPENVDAKINVDAWQIPPIFKFMAEKGNMSKDDIFGTFNMGIGMVVVVSKEDVNGAIAVLNKAGQEAHIIGEVVEGAKQVIL</sequence>
<feature type="chain" id="PRO_1000083448" description="Phosphoribosylformylglycinamidine cyclo-ligase">
    <location>
        <begin position="1"/>
        <end position="341"/>
    </location>
</feature>
<comment type="catalytic activity">
    <reaction evidence="1">
        <text>2-formamido-N(1)-(5-O-phospho-beta-D-ribosyl)acetamidine + ATP = 5-amino-1-(5-phospho-beta-D-ribosyl)imidazole + ADP + phosphate + H(+)</text>
        <dbReference type="Rhea" id="RHEA:23032"/>
        <dbReference type="ChEBI" id="CHEBI:15378"/>
        <dbReference type="ChEBI" id="CHEBI:30616"/>
        <dbReference type="ChEBI" id="CHEBI:43474"/>
        <dbReference type="ChEBI" id="CHEBI:137981"/>
        <dbReference type="ChEBI" id="CHEBI:147287"/>
        <dbReference type="ChEBI" id="CHEBI:456216"/>
        <dbReference type="EC" id="6.3.3.1"/>
    </reaction>
</comment>
<comment type="pathway">
    <text evidence="1">Purine metabolism; IMP biosynthesis via de novo pathway; 5-amino-1-(5-phospho-D-ribosyl)imidazole from N(2)-formyl-N(1)-(5-phospho-D-ribosyl)glycinamide: step 2/2.</text>
</comment>
<comment type="subcellular location">
    <subcellularLocation>
        <location evidence="1">Cytoplasm</location>
    </subcellularLocation>
</comment>
<comment type="similarity">
    <text evidence="1">Belongs to the AIR synthase family.</text>
</comment>
<organism>
    <name type="scientific">Alkaliphilus oremlandii (strain OhILAs)</name>
    <name type="common">Clostridium oremlandii (strain OhILAs)</name>
    <dbReference type="NCBI Taxonomy" id="350688"/>
    <lineage>
        <taxon>Bacteria</taxon>
        <taxon>Bacillati</taxon>
        <taxon>Bacillota</taxon>
        <taxon>Clostridia</taxon>
        <taxon>Peptostreptococcales</taxon>
        <taxon>Natronincolaceae</taxon>
        <taxon>Alkaliphilus</taxon>
    </lineage>
</organism>
<keyword id="KW-0067">ATP-binding</keyword>
<keyword id="KW-0963">Cytoplasm</keyword>
<keyword id="KW-0436">Ligase</keyword>
<keyword id="KW-0547">Nucleotide-binding</keyword>
<keyword id="KW-0658">Purine biosynthesis</keyword>
<keyword id="KW-1185">Reference proteome</keyword>
<proteinExistence type="inferred from homology"/>
<gene>
    <name evidence="1" type="primary">purM</name>
    <name type="ordered locus">Clos_0539</name>
</gene>
<evidence type="ECO:0000255" key="1">
    <source>
        <dbReference type="HAMAP-Rule" id="MF_00741"/>
    </source>
</evidence>
<dbReference type="EC" id="6.3.3.1" evidence="1"/>
<dbReference type="EMBL" id="CP000853">
    <property type="protein sequence ID" value="ABW18101.1"/>
    <property type="molecule type" value="Genomic_DNA"/>
</dbReference>
<dbReference type="RefSeq" id="WP_012158415.1">
    <property type="nucleotide sequence ID" value="NC_009922.1"/>
</dbReference>
<dbReference type="SMR" id="A8MLI7"/>
<dbReference type="STRING" id="350688.Clos_0539"/>
<dbReference type="KEGG" id="aoe:Clos_0539"/>
<dbReference type="eggNOG" id="COG0150">
    <property type="taxonomic scope" value="Bacteria"/>
</dbReference>
<dbReference type="HOGENOM" id="CLU_047116_0_0_9"/>
<dbReference type="OrthoDB" id="9802507at2"/>
<dbReference type="UniPathway" id="UPA00074">
    <property type="reaction ID" value="UER00129"/>
</dbReference>
<dbReference type="Proteomes" id="UP000000269">
    <property type="component" value="Chromosome"/>
</dbReference>
<dbReference type="GO" id="GO:0005829">
    <property type="term" value="C:cytosol"/>
    <property type="evidence" value="ECO:0007669"/>
    <property type="project" value="TreeGrafter"/>
</dbReference>
<dbReference type="GO" id="GO:0005524">
    <property type="term" value="F:ATP binding"/>
    <property type="evidence" value="ECO:0007669"/>
    <property type="project" value="UniProtKB-KW"/>
</dbReference>
<dbReference type="GO" id="GO:0004637">
    <property type="term" value="F:phosphoribosylamine-glycine ligase activity"/>
    <property type="evidence" value="ECO:0007669"/>
    <property type="project" value="TreeGrafter"/>
</dbReference>
<dbReference type="GO" id="GO:0004641">
    <property type="term" value="F:phosphoribosylformylglycinamidine cyclo-ligase activity"/>
    <property type="evidence" value="ECO:0007669"/>
    <property type="project" value="UniProtKB-UniRule"/>
</dbReference>
<dbReference type="GO" id="GO:0006189">
    <property type="term" value="P:'de novo' IMP biosynthetic process"/>
    <property type="evidence" value="ECO:0007669"/>
    <property type="project" value="UniProtKB-UniRule"/>
</dbReference>
<dbReference type="GO" id="GO:0046084">
    <property type="term" value="P:adenine biosynthetic process"/>
    <property type="evidence" value="ECO:0007669"/>
    <property type="project" value="TreeGrafter"/>
</dbReference>
<dbReference type="CDD" id="cd02196">
    <property type="entry name" value="PurM"/>
    <property type="match status" value="1"/>
</dbReference>
<dbReference type="FunFam" id="3.30.1330.10:FF:000001">
    <property type="entry name" value="Phosphoribosylformylglycinamidine cyclo-ligase"/>
    <property type="match status" value="1"/>
</dbReference>
<dbReference type="FunFam" id="3.90.650.10:FF:000001">
    <property type="entry name" value="Phosphoribosylformylglycinamidine cyclo-ligase"/>
    <property type="match status" value="1"/>
</dbReference>
<dbReference type="Gene3D" id="3.90.650.10">
    <property type="entry name" value="PurM-like C-terminal domain"/>
    <property type="match status" value="1"/>
</dbReference>
<dbReference type="Gene3D" id="3.30.1330.10">
    <property type="entry name" value="PurM-like, N-terminal domain"/>
    <property type="match status" value="1"/>
</dbReference>
<dbReference type="HAMAP" id="MF_00741">
    <property type="entry name" value="AIRS"/>
    <property type="match status" value="1"/>
</dbReference>
<dbReference type="InterPro" id="IPR010918">
    <property type="entry name" value="PurM-like_C_dom"/>
</dbReference>
<dbReference type="InterPro" id="IPR036676">
    <property type="entry name" value="PurM-like_C_sf"/>
</dbReference>
<dbReference type="InterPro" id="IPR016188">
    <property type="entry name" value="PurM-like_N"/>
</dbReference>
<dbReference type="InterPro" id="IPR036921">
    <property type="entry name" value="PurM-like_N_sf"/>
</dbReference>
<dbReference type="InterPro" id="IPR004733">
    <property type="entry name" value="PurM_cligase"/>
</dbReference>
<dbReference type="NCBIfam" id="TIGR00878">
    <property type="entry name" value="purM"/>
    <property type="match status" value="1"/>
</dbReference>
<dbReference type="PANTHER" id="PTHR10520:SF12">
    <property type="entry name" value="TRIFUNCTIONAL PURINE BIOSYNTHETIC PROTEIN ADENOSINE-3"/>
    <property type="match status" value="1"/>
</dbReference>
<dbReference type="PANTHER" id="PTHR10520">
    <property type="entry name" value="TRIFUNCTIONAL PURINE BIOSYNTHETIC PROTEIN ADENOSINE-3-RELATED"/>
    <property type="match status" value="1"/>
</dbReference>
<dbReference type="Pfam" id="PF00586">
    <property type="entry name" value="AIRS"/>
    <property type="match status" value="1"/>
</dbReference>
<dbReference type="Pfam" id="PF02769">
    <property type="entry name" value="AIRS_C"/>
    <property type="match status" value="1"/>
</dbReference>
<dbReference type="SUPFAM" id="SSF56042">
    <property type="entry name" value="PurM C-terminal domain-like"/>
    <property type="match status" value="1"/>
</dbReference>
<dbReference type="SUPFAM" id="SSF55326">
    <property type="entry name" value="PurM N-terminal domain-like"/>
    <property type="match status" value="1"/>
</dbReference>
<protein>
    <recommendedName>
        <fullName evidence="1">Phosphoribosylformylglycinamidine cyclo-ligase</fullName>
        <ecNumber evidence="1">6.3.3.1</ecNumber>
    </recommendedName>
    <alternativeName>
        <fullName evidence="1">AIR synthase</fullName>
    </alternativeName>
    <alternativeName>
        <fullName evidence="1">AIRS</fullName>
    </alternativeName>
    <alternativeName>
        <fullName evidence="1">Phosphoribosyl-aminoimidazole synthetase</fullName>
    </alternativeName>
</protein>
<name>PUR5_ALKOO</name>
<accession>A8MLI7</accession>
<reference key="1">
    <citation type="submission" date="2007-10" db="EMBL/GenBank/DDBJ databases">
        <title>Complete genome of Alkaliphilus oremlandii OhILAs.</title>
        <authorList>
            <person name="Copeland A."/>
            <person name="Lucas S."/>
            <person name="Lapidus A."/>
            <person name="Barry K."/>
            <person name="Detter J.C."/>
            <person name="Glavina del Rio T."/>
            <person name="Hammon N."/>
            <person name="Israni S."/>
            <person name="Dalin E."/>
            <person name="Tice H."/>
            <person name="Pitluck S."/>
            <person name="Chain P."/>
            <person name="Malfatti S."/>
            <person name="Shin M."/>
            <person name="Vergez L."/>
            <person name="Schmutz J."/>
            <person name="Larimer F."/>
            <person name="Land M."/>
            <person name="Hauser L."/>
            <person name="Kyrpides N."/>
            <person name="Mikhailova N."/>
            <person name="Stolz J.F."/>
            <person name="Dawson A."/>
            <person name="Fisher E."/>
            <person name="Crable B."/>
            <person name="Perera E."/>
            <person name="Lisak J."/>
            <person name="Ranganathan M."/>
            <person name="Basu P."/>
            <person name="Richardson P."/>
        </authorList>
    </citation>
    <scope>NUCLEOTIDE SEQUENCE [LARGE SCALE GENOMIC DNA]</scope>
    <source>
        <strain>OhILAs</strain>
    </source>
</reference>